<protein>
    <recommendedName>
        <fullName evidence="1">Probable ribonuclease FAU-1</fullName>
        <ecNumber evidence="1">3.1.26.-</ecNumber>
    </recommendedName>
    <alternativeName>
        <fullName evidence="1">RNA-binding protein FAU-1</fullName>
    </alternativeName>
</protein>
<sequence>MGTDNHSVRVSVRGIYATALTKRLLDADYEIVQASPVIRERFDIDFDTVYNTVTVTTTDDHQGVGIHGTESAVRSVADVLTSCGRDTLAWDDLTPPGVIFTAQITETQGSGAICALIPAENPDTESKTEPDLNDVHIPDESVATGYLPYDSTDKHIEQGDIMTVQSHRSMPPWDNTDQRADAVVGTTLRANGGLATLIQGHEGVTVDTYDDEDARELAGMIELIDIDLPTGWGIEVNHAATQASLTALKSGLERAIDRAEDISDGAVAEEVTSTGRWLWFGRESRFALDEIRRSVITTIHGHHRIKAAGETASAGVDLAEALCGDIGDGNVQIQHNEFPFEVVTQQFGPTEGERVELYHGKPEGHAFSLGQGEVTDWDANGTIEVTRRISGHGSGTYDELGTPRESGDTAVTRVREGRWWYPTVYRSRDGEHKGTYVNICTPIECFPKSIRYVDLHVDVVKYPDGTVERVDDDELNTAVTAGHIPPALAEKAQSVASSLERALDK</sequence>
<organism>
    <name type="scientific">Haloquadratum walsbyi (strain DSM 16790 / HBSQ001)</name>
    <dbReference type="NCBI Taxonomy" id="362976"/>
    <lineage>
        <taxon>Archaea</taxon>
        <taxon>Methanobacteriati</taxon>
        <taxon>Methanobacteriota</taxon>
        <taxon>Stenosarchaea group</taxon>
        <taxon>Halobacteria</taxon>
        <taxon>Halobacteriales</taxon>
        <taxon>Haloferacaceae</taxon>
        <taxon>Haloquadratum</taxon>
    </lineage>
</organism>
<gene>
    <name evidence="1" type="primary">fau-1</name>
    <name type="ordered locus">HQ_1398A</name>
</gene>
<dbReference type="EC" id="3.1.26.-" evidence="1"/>
<dbReference type="EMBL" id="AM180088">
    <property type="protein sequence ID" value="CAJ51526.1"/>
    <property type="molecule type" value="Genomic_DNA"/>
</dbReference>
<dbReference type="RefSeq" id="WP_011570681.1">
    <property type="nucleotide sequence ID" value="NC_008212.1"/>
</dbReference>
<dbReference type="SMR" id="Q18KC5"/>
<dbReference type="STRING" id="362976.HQ_1398A"/>
<dbReference type="GeneID" id="4192294"/>
<dbReference type="KEGG" id="hwa:HQ_1398A"/>
<dbReference type="eggNOG" id="arCOG04307">
    <property type="taxonomic scope" value="Archaea"/>
</dbReference>
<dbReference type="HOGENOM" id="CLU_044303_0_0_2"/>
<dbReference type="Proteomes" id="UP000001975">
    <property type="component" value="Chromosome"/>
</dbReference>
<dbReference type="GO" id="GO:0035925">
    <property type="term" value="F:mRNA 3'-UTR AU-rich region binding"/>
    <property type="evidence" value="ECO:0007669"/>
    <property type="project" value="UniProtKB-UniRule"/>
</dbReference>
<dbReference type="GO" id="GO:0016891">
    <property type="term" value="F:RNA endonuclease activity, producing 5'-phosphomonoesters"/>
    <property type="evidence" value="ECO:0007669"/>
    <property type="project" value="UniProtKB-UniRule"/>
</dbReference>
<dbReference type="GO" id="GO:0006364">
    <property type="term" value="P:rRNA processing"/>
    <property type="evidence" value="ECO:0007669"/>
    <property type="project" value="UniProtKB-UniRule"/>
</dbReference>
<dbReference type="Gene3D" id="2.40.380.10">
    <property type="entry name" value="FomD-like"/>
    <property type="match status" value="1"/>
</dbReference>
<dbReference type="HAMAP" id="MF_01910">
    <property type="entry name" value="RNA_binding_AU_1"/>
    <property type="match status" value="1"/>
</dbReference>
<dbReference type="InterPro" id="IPR007295">
    <property type="entry name" value="DUF402"/>
</dbReference>
<dbReference type="InterPro" id="IPR035930">
    <property type="entry name" value="FomD-like_sf"/>
</dbReference>
<dbReference type="InterPro" id="IPR050212">
    <property type="entry name" value="Ntdp-like"/>
</dbReference>
<dbReference type="InterPro" id="IPR016730">
    <property type="entry name" value="RNA-bd_FAU-1"/>
</dbReference>
<dbReference type="PANTHER" id="PTHR39159">
    <property type="match status" value="1"/>
</dbReference>
<dbReference type="PANTHER" id="PTHR39159:SF1">
    <property type="entry name" value="UPF0374 PROTEIN YGAC"/>
    <property type="match status" value="1"/>
</dbReference>
<dbReference type="Pfam" id="PF04167">
    <property type="entry name" value="DUF402"/>
    <property type="match status" value="1"/>
</dbReference>
<dbReference type="SUPFAM" id="SSF159234">
    <property type="entry name" value="FomD-like"/>
    <property type="match status" value="1"/>
</dbReference>
<reference key="1">
    <citation type="journal article" date="2006" name="BMC Genomics">
        <title>The genome of the square archaeon Haloquadratum walsbyi: life at the limits of water activity.</title>
        <authorList>
            <person name="Bolhuis H."/>
            <person name="Palm P."/>
            <person name="Wende A."/>
            <person name="Falb M."/>
            <person name="Rampp M."/>
            <person name="Rodriguez-Valera F."/>
            <person name="Pfeiffer F."/>
            <person name="Oesterhelt D."/>
        </authorList>
    </citation>
    <scope>NUCLEOTIDE SEQUENCE [LARGE SCALE GENOMIC DNA]</scope>
    <source>
        <strain>DSM 16790 / HBSQ001</strain>
    </source>
</reference>
<proteinExistence type="inferred from homology"/>
<evidence type="ECO:0000255" key="1">
    <source>
        <dbReference type="HAMAP-Rule" id="MF_01910"/>
    </source>
</evidence>
<evidence type="ECO:0000256" key="2">
    <source>
        <dbReference type="SAM" id="MobiDB-lite"/>
    </source>
</evidence>
<accession>Q18KC5</accession>
<feature type="chain" id="PRO_0000334197" description="Probable ribonuclease FAU-1">
    <location>
        <begin position="1"/>
        <end position="505"/>
    </location>
</feature>
<feature type="region of interest" description="Disordered" evidence="2">
    <location>
        <begin position="389"/>
        <end position="408"/>
    </location>
</feature>
<keyword id="KW-0255">Endonuclease</keyword>
<keyword id="KW-0378">Hydrolase</keyword>
<keyword id="KW-0540">Nuclease</keyword>
<keyword id="KW-1185">Reference proteome</keyword>
<keyword id="KW-0694">RNA-binding</keyword>
<keyword id="KW-0698">rRNA processing</keyword>
<name>FAU1_HALWD</name>
<comment type="function">
    <text evidence="1">Probable RNase involved in rRNA stability through maturation and/or degradation of precursor rRNAs. Binds to RNA in loop regions with AU-rich sequences.</text>
</comment>
<comment type="similarity">
    <text evidence="1">Belongs to the FAU-1 family.</text>
</comment>